<reference key="1">
    <citation type="journal article" date="2000" name="Science">
        <title>The genome sequence of Drosophila melanogaster.</title>
        <authorList>
            <person name="Adams M.D."/>
            <person name="Celniker S.E."/>
            <person name="Holt R.A."/>
            <person name="Evans C.A."/>
            <person name="Gocayne J.D."/>
            <person name="Amanatides P.G."/>
            <person name="Scherer S.E."/>
            <person name="Li P.W."/>
            <person name="Hoskins R.A."/>
            <person name="Galle R.F."/>
            <person name="George R.A."/>
            <person name="Lewis S.E."/>
            <person name="Richards S."/>
            <person name="Ashburner M."/>
            <person name="Henderson S.N."/>
            <person name="Sutton G.G."/>
            <person name="Wortman J.R."/>
            <person name="Yandell M.D."/>
            <person name="Zhang Q."/>
            <person name="Chen L.X."/>
            <person name="Brandon R.C."/>
            <person name="Rogers Y.-H.C."/>
            <person name="Blazej R.G."/>
            <person name="Champe M."/>
            <person name="Pfeiffer B.D."/>
            <person name="Wan K.H."/>
            <person name="Doyle C."/>
            <person name="Baxter E.G."/>
            <person name="Helt G."/>
            <person name="Nelson C.R."/>
            <person name="Miklos G.L.G."/>
            <person name="Abril J.F."/>
            <person name="Agbayani A."/>
            <person name="An H.-J."/>
            <person name="Andrews-Pfannkoch C."/>
            <person name="Baldwin D."/>
            <person name="Ballew R.M."/>
            <person name="Basu A."/>
            <person name="Baxendale J."/>
            <person name="Bayraktaroglu L."/>
            <person name="Beasley E.M."/>
            <person name="Beeson K.Y."/>
            <person name="Benos P.V."/>
            <person name="Berman B.P."/>
            <person name="Bhandari D."/>
            <person name="Bolshakov S."/>
            <person name="Borkova D."/>
            <person name="Botchan M.R."/>
            <person name="Bouck J."/>
            <person name="Brokstein P."/>
            <person name="Brottier P."/>
            <person name="Burtis K.C."/>
            <person name="Busam D.A."/>
            <person name="Butler H."/>
            <person name="Cadieu E."/>
            <person name="Center A."/>
            <person name="Chandra I."/>
            <person name="Cherry J.M."/>
            <person name="Cawley S."/>
            <person name="Dahlke C."/>
            <person name="Davenport L.B."/>
            <person name="Davies P."/>
            <person name="de Pablos B."/>
            <person name="Delcher A."/>
            <person name="Deng Z."/>
            <person name="Mays A.D."/>
            <person name="Dew I."/>
            <person name="Dietz S.M."/>
            <person name="Dodson K."/>
            <person name="Doup L.E."/>
            <person name="Downes M."/>
            <person name="Dugan-Rocha S."/>
            <person name="Dunkov B.C."/>
            <person name="Dunn P."/>
            <person name="Durbin K.J."/>
            <person name="Evangelista C.C."/>
            <person name="Ferraz C."/>
            <person name="Ferriera S."/>
            <person name="Fleischmann W."/>
            <person name="Fosler C."/>
            <person name="Gabrielian A.E."/>
            <person name="Garg N.S."/>
            <person name="Gelbart W.M."/>
            <person name="Glasser K."/>
            <person name="Glodek A."/>
            <person name="Gong F."/>
            <person name="Gorrell J.H."/>
            <person name="Gu Z."/>
            <person name="Guan P."/>
            <person name="Harris M."/>
            <person name="Harris N.L."/>
            <person name="Harvey D.A."/>
            <person name="Heiman T.J."/>
            <person name="Hernandez J.R."/>
            <person name="Houck J."/>
            <person name="Hostin D."/>
            <person name="Houston K.A."/>
            <person name="Howland T.J."/>
            <person name="Wei M.-H."/>
            <person name="Ibegwam C."/>
            <person name="Jalali M."/>
            <person name="Kalush F."/>
            <person name="Karpen G.H."/>
            <person name="Ke Z."/>
            <person name="Kennison J.A."/>
            <person name="Ketchum K.A."/>
            <person name="Kimmel B.E."/>
            <person name="Kodira C.D."/>
            <person name="Kraft C.L."/>
            <person name="Kravitz S."/>
            <person name="Kulp D."/>
            <person name="Lai Z."/>
            <person name="Lasko P."/>
            <person name="Lei Y."/>
            <person name="Levitsky A.A."/>
            <person name="Li J.H."/>
            <person name="Li Z."/>
            <person name="Liang Y."/>
            <person name="Lin X."/>
            <person name="Liu X."/>
            <person name="Mattei B."/>
            <person name="McIntosh T.C."/>
            <person name="McLeod M.P."/>
            <person name="McPherson D."/>
            <person name="Merkulov G."/>
            <person name="Milshina N.V."/>
            <person name="Mobarry C."/>
            <person name="Morris J."/>
            <person name="Moshrefi A."/>
            <person name="Mount S.M."/>
            <person name="Moy M."/>
            <person name="Murphy B."/>
            <person name="Murphy L."/>
            <person name="Muzny D.M."/>
            <person name="Nelson D.L."/>
            <person name="Nelson D.R."/>
            <person name="Nelson K.A."/>
            <person name="Nixon K."/>
            <person name="Nusskern D.R."/>
            <person name="Pacleb J.M."/>
            <person name="Palazzolo M."/>
            <person name="Pittman G.S."/>
            <person name="Pan S."/>
            <person name="Pollard J."/>
            <person name="Puri V."/>
            <person name="Reese M.G."/>
            <person name="Reinert K."/>
            <person name="Remington K."/>
            <person name="Saunders R.D.C."/>
            <person name="Scheeler F."/>
            <person name="Shen H."/>
            <person name="Shue B.C."/>
            <person name="Siden-Kiamos I."/>
            <person name="Simpson M."/>
            <person name="Skupski M.P."/>
            <person name="Smith T.J."/>
            <person name="Spier E."/>
            <person name="Spradling A.C."/>
            <person name="Stapleton M."/>
            <person name="Strong R."/>
            <person name="Sun E."/>
            <person name="Svirskas R."/>
            <person name="Tector C."/>
            <person name="Turner R."/>
            <person name="Venter E."/>
            <person name="Wang A.H."/>
            <person name="Wang X."/>
            <person name="Wang Z.-Y."/>
            <person name="Wassarman D.A."/>
            <person name="Weinstock G.M."/>
            <person name="Weissenbach J."/>
            <person name="Williams S.M."/>
            <person name="Woodage T."/>
            <person name="Worley K.C."/>
            <person name="Wu D."/>
            <person name="Yang S."/>
            <person name="Yao Q.A."/>
            <person name="Ye J."/>
            <person name="Yeh R.-F."/>
            <person name="Zaveri J.S."/>
            <person name="Zhan M."/>
            <person name="Zhang G."/>
            <person name="Zhao Q."/>
            <person name="Zheng L."/>
            <person name="Zheng X.H."/>
            <person name="Zhong F.N."/>
            <person name="Zhong W."/>
            <person name="Zhou X."/>
            <person name="Zhu S.C."/>
            <person name="Zhu X."/>
            <person name="Smith H.O."/>
            <person name="Gibbs R.A."/>
            <person name="Myers E.W."/>
            <person name="Rubin G.M."/>
            <person name="Venter J.C."/>
        </authorList>
    </citation>
    <scope>NUCLEOTIDE SEQUENCE [LARGE SCALE GENOMIC DNA]</scope>
    <source>
        <strain>Berkeley</strain>
    </source>
</reference>
<reference key="2">
    <citation type="journal article" date="2002" name="Genome Biol.">
        <title>Annotation of the Drosophila melanogaster euchromatic genome: a systematic review.</title>
        <authorList>
            <person name="Misra S."/>
            <person name="Crosby M.A."/>
            <person name="Mungall C.J."/>
            <person name="Matthews B.B."/>
            <person name="Campbell K.S."/>
            <person name="Hradecky P."/>
            <person name="Huang Y."/>
            <person name="Kaminker J.S."/>
            <person name="Millburn G.H."/>
            <person name="Prochnik S.E."/>
            <person name="Smith C.D."/>
            <person name="Tupy J.L."/>
            <person name="Whitfield E.J."/>
            <person name="Bayraktaroglu L."/>
            <person name="Berman B.P."/>
            <person name="Bettencourt B.R."/>
            <person name="Celniker S.E."/>
            <person name="de Grey A.D.N.J."/>
            <person name="Drysdale R.A."/>
            <person name="Harris N.L."/>
            <person name="Richter J."/>
            <person name="Russo S."/>
            <person name="Schroeder A.J."/>
            <person name="Shu S.Q."/>
            <person name="Stapleton M."/>
            <person name="Yamada C."/>
            <person name="Ashburner M."/>
            <person name="Gelbart W.M."/>
            <person name="Rubin G.M."/>
            <person name="Lewis S.E."/>
        </authorList>
    </citation>
    <scope>GENOME REANNOTATION</scope>
    <source>
        <strain>Berkeley</strain>
    </source>
</reference>
<reference key="3">
    <citation type="journal article" date="2002" name="Genome Biol.">
        <title>A Drosophila full-length cDNA resource.</title>
        <authorList>
            <person name="Stapleton M."/>
            <person name="Carlson J.W."/>
            <person name="Brokstein P."/>
            <person name="Yu C."/>
            <person name="Champe M."/>
            <person name="George R.A."/>
            <person name="Guarin H."/>
            <person name="Kronmiller B."/>
            <person name="Pacleb J.M."/>
            <person name="Park S."/>
            <person name="Wan K.H."/>
            <person name="Rubin G.M."/>
            <person name="Celniker S.E."/>
        </authorList>
    </citation>
    <scope>NUCLEOTIDE SEQUENCE [LARGE SCALE MRNA]</scope>
    <source>
        <strain>Berkeley</strain>
        <tissue>Head</tissue>
    </source>
</reference>
<dbReference type="EC" id="1.14.-.-"/>
<dbReference type="EMBL" id="AE014297">
    <property type="protein sequence ID" value="AAF55009.1"/>
    <property type="molecule type" value="Genomic_DNA"/>
</dbReference>
<dbReference type="EMBL" id="AY118299">
    <property type="protein sequence ID" value="AAM48328.1"/>
    <property type="molecule type" value="mRNA"/>
</dbReference>
<dbReference type="RefSeq" id="NP_650327.1">
    <property type="nucleotide sequence ID" value="NM_142070.3"/>
</dbReference>
<dbReference type="SMR" id="Q9VFP1"/>
<dbReference type="BioGRID" id="66783">
    <property type="interactions" value="3"/>
</dbReference>
<dbReference type="DIP" id="DIP-20369N"/>
<dbReference type="FunCoup" id="Q9VFP1">
    <property type="interactions" value="40"/>
</dbReference>
<dbReference type="IntAct" id="Q9VFP1">
    <property type="interactions" value="2"/>
</dbReference>
<dbReference type="STRING" id="7227.FBpp0088707"/>
<dbReference type="PaxDb" id="7227-FBpp0088707"/>
<dbReference type="DNASU" id="41706"/>
<dbReference type="EnsemblMetazoa" id="FBtr0089766">
    <property type="protein sequence ID" value="FBpp0088707"/>
    <property type="gene ID" value="FBgn0038194"/>
</dbReference>
<dbReference type="GeneID" id="41706"/>
<dbReference type="KEGG" id="dme:Dmel_CG3050"/>
<dbReference type="UCSC" id="CG3050-RA">
    <property type="organism name" value="d. melanogaster"/>
</dbReference>
<dbReference type="AGR" id="FB:FBgn0038194"/>
<dbReference type="CTD" id="41706"/>
<dbReference type="FlyBase" id="FBgn0038194">
    <property type="gene designation" value="Cyp6d5"/>
</dbReference>
<dbReference type="VEuPathDB" id="VectorBase:FBgn0038194"/>
<dbReference type="eggNOG" id="KOG0158">
    <property type="taxonomic scope" value="Eukaryota"/>
</dbReference>
<dbReference type="GeneTree" id="ENSGT00940000168877"/>
<dbReference type="HOGENOM" id="CLU_001570_5_2_1"/>
<dbReference type="InParanoid" id="Q9VFP1"/>
<dbReference type="OMA" id="KWTFSFW"/>
<dbReference type="OrthoDB" id="2789670at2759"/>
<dbReference type="PhylomeDB" id="Q9VFP1"/>
<dbReference type="BioGRID-ORCS" id="41706">
    <property type="hits" value="0 hits in 3 CRISPR screens"/>
</dbReference>
<dbReference type="GenomeRNAi" id="41706"/>
<dbReference type="PRO" id="PR:Q9VFP1"/>
<dbReference type="Proteomes" id="UP000000803">
    <property type="component" value="Chromosome 3R"/>
</dbReference>
<dbReference type="Bgee" id="FBgn0038194">
    <property type="expression patterns" value="Expressed in visual pigment cell (sensu Nematoda and Protostomia) in testis and 163 other cell types or tissues"/>
</dbReference>
<dbReference type="GO" id="GO:0005789">
    <property type="term" value="C:endoplasmic reticulum membrane"/>
    <property type="evidence" value="ECO:0007669"/>
    <property type="project" value="UniProtKB-SubCell"/>
</dbReference>
<dbReference type="GO" id="GO:0020037">
    <property type="term" value="F:heme binding"/>
    <property type="evidence" value="ECO:0007669"/>
    <property type="project" value="InterPro"/>
</dbReference>
<dbReference type="GO" id="GO:0005506">
    <property type="term" value="F:iron ion binding"/>
    <property type="evidence" value="ECO:0007669"/>
    <property type="project" value="InterPro"/>
</dbReference>
<dbReference type="GO" id="GO:0004497">
    <property type="term" value="F:monooxygenase activity"/>
    <property type="evidence" value="ECO:0007669"/>
    <property type="project" value="UniProtKB-KW"/>
</dbReference>
<dbReference type="GO" id="GO:0016705">
    <property type="term" value="F:oxidoreductase activity, acting on paired donors, with incorporation or reduction of molecular oxygen"/>
    <property type="evidence" value="ECO:0007669"/>
    <property type="project" value="InterPro"/>
</dbReference>
<dbReference type="CDD" id="cd11056">
    <property type="entry name" value="CYP6-like"/>
    <property type="match status" value="1"/>
</dbReference>
<dbReference type="FunFam" id="1.10.630.10:FF:000042">
    <property type="entry name" value="Cytochrome P450"/>
    <property type="match status" value="1"/>
</dbReference>
<dbReference type="Gene3D" id="1.10.630.10">
    <property type="entry name" value="Cytochrome P450"/>
    <property type="match status" value="1"/>
</dbReference>
<dbReference type="InterPro" id="IPR001128">
    <property type="entry name" value="Cyt_P450"/>
</dbReference>
<dbReference type="InterPro" id="IPR017972">
    <property type="entry name" value="Cyt_P450_CS"/>
</dbReference>
<dbReference type="InterPro" id="IPR002401">
    <property type="entry name" value="Cyt_P450_E_grp-I"/>
</dbReference>
<dbReference type="InterPro" id="IPR036396">
    <property type="entry name" value="Cyt_P450_sf"/>
</dbReference>
<dbReference type="InterPro" id="IPR050476">
    <property type="entry name" value="Insect_CytP450_Detox"/>
</dbReference>
<dbReference type="PANTHER" id="PTHR24292">
    <property type="entry name" value="CYTOCHROME P450"/>
    <property type="match status" value="1"/>
</dbReference>
<dbReference type="PANTHER" id="PTHR24292:SF93">
    <property type="entry name" value="CYTOCHROME P450 310A1-RELATED"/>
    <property type="match status" value="1"/>
</dbReference>
<dbReference type="Pfam" id="PF00067">
    <property type="entry name" value="p450"/>
    <property type="match status" value="1"/>
</dbReference>
<dbReference type="PRINTS" id="PR00463">
    <property type="entry name" value="EP450I"/>
</dbReference>
<dbReference type="PRINTS" id="PR00385">
    <property type="entry name" value="P450"/>
</dbReference>
<dbReference type="SUPFAM" id="SSF48264">
    <property type="entry name" value="Cytochrome P450"/>
    <property type="match status" value="1"/>
</dbReference>
<dbReference type="PROSITE" id="PS00086">
    <property type="entry name" value="CYTOCHROME_P450"/>
    <property type="match status" value="1"/>
</dbReference>
<evidence type="ECO:0000250" key="1"/>
<evidence type="ECO:0000305" key="2"/>
<protein>
    <recommendedName>
        <fullName>Probable cytochrome P450 6d5</fullName>
        <ecNumber>1.14.-.-</ecNumber>
    </recommendedName>
    <alternativeName>
        <fullName>CYPVID5</fullName>
    </alternativeName>
</protein>
<feature type="chain" id="PRO_0000051882" description="Probable cytochrome P450 6d5">
    <location>
        <begin position="1"/>
        <end position="508"/>
    </location>
</feature>
<feature type="binding site" description="axial binding residue" evidence="1">
    <location>
        <position position="453"/>
    </location>
    <ligand>
        <name>heme</name>
        <dbReference type="ChEBI" id="CHEBI:30413"/>
    </ligand>
    <ligandPart>
        <name>Fe</name>
        <dbReference type="ChEBI" id="CHEBI:18248"/>
    </ligandPart>
</feature>
<gene>
    <name type="primary">Cyp6d5</name>
    <name type="ORF">CG3050</name>
</gene>
<keyword id="KW-0256">Endoplasmic reticulum</keyword>
<keyword id="KW-0349">Heme</keyword>
<keyword id="KW-0408">Iron</keyword>
<keyword id="KW-0472">Membrane</keyword>
<keyword id="KW-0479">Metal-binding</keyword>
<keyword id="KW-0492">Microsome</keyword>
<keyword id="KW-0503">Monooxygenase</keyword>
<keyword id="KW-0560">Oxidoreductase</keyword>
<keyword id="KW-1185">Reference proteome</keyword>
<name>CP6D5_DROME</name>
<organism>
    <name type="scientific">Drosophila melanogaster</name>
    <name type="common">Fruit fly</name>
    <dbReference type="NCBI Taxonomy" id="7227"/>
    <lineage>
        <taxon>Eukaryota</taxon>
        <taxon>Metazoa</taxon>
        <taxon>Ecdysozoa</taxon>
        <taxon>Arthropoda</taxon>
        <taxon>Hexapoda</taxon>
        <taxon>Insecta</taxon>
        <taxon>Pterygota</taxon>
        <taxon>Neoptera</taxon>
        <taxon>Endopterygota</taxon>
        <taxon>Diptera</taxon>
        <taxon>Brachycera</taxon>
        <taxon>Muscomorpha</taxon>
        <taxon>Ephydroidea</taxon>
        <taxon>Drosophilidae</taxon>
        <taxon>Drosophila</taxon>
        <taxon>Sophophora</taxon>
    </lineage>
</organism>
<proteinExistence type="evidence at transcript level"/>
<accession>Q9VFP1</accession>
<sequence>MIGIYLLIAAVTLLYVYLKWTFSYWDRKGFPSTGVSIPFGALESVTKGKRSFGMAIYDMYKSTKEPVIGLYLTLRPALLVRDAQLAHDVLVKDFASFHDRGVYVDEKNDPMSASLFQMEGASWRALRNKLTPSFTSGKLKAMFETSDSVGDKLVDSIRKQLPANGAKELELKKLMATYAIDIIATTIFGLDVDSFADPNNEFQIISKKVNRNNIEDIIRGTSSFLYPGLEKFFVKIGWKQEATERMRELSNRTVDLREQNNIVRKDLLQLLLQLRNQGKINTDDNIWSAESTKNGVKSMSKDLIAGQLFLFYVAGYETTASTTSFTLYELTQNPEVMEKAKEDVRSAIEKHGGKLTYDAISDMKYLEACILETARKYPALPLLNRICTKDYPVPDSKLVIQKGTPIIISLIGMHRDEEYFPDPLAYKPERYLENGKDYTQAAYLPFGEGPRMCIGARMGKVNVKIAIAKVLSNFDLEIRKEKCEIEFGVYGIPLMPKSGVPVRLSLKK</sequence>
<comment type="function">
    <text evidence="1">May be involved in the metabolism of insect hormones and in the breakdown of synthetic insecticides.</text>
</comment>
<comment type="cofactor">
    <cofactor evidence="1">
        <name>heme</name>
        <dbReference type="ChEBI" id="CHEBI:30413"/>
    </cofactor>
</comment>
<comment type="subcellular location">
    <subcellularLocation>
        <location evidence="2">Endoplasmic reticulum membrane</location>
        <topology evidence="2">Peripheral membrane protein</topology>
    </subcellularLocation>
    <subcellularLocation>
        <location evidence="2">Microsome membrane</location>
        <topology evidence="2">Peripheral membrane protein</topology>
    </subcellularLocation>
</comment>
<comment type="similarity">
    <text evidence="2">Belongs to the cytochrome P450 family.</text>
</comment>